<organism>
    <name type="scientific">Rhizobium meliloti (strain 1021)</name>
    <name type="common">Ensifer meliloti</name>
    <name type="synonym">Sinorhizobium meliloti</name>
    <dbReference type="NCBI Taxonomy" id="266834"/>
    <lineage>
        <taxon>Bacteria</taxon>
        <taxon>Pseudomonadati</taxon>
        <taxon>Pseudomonadota</taxon>
        <taxon>Alphaproteobacteria</taxon>
        <taxon>Hyphomicrobiales</taxon>
        <taxon>Rhizobiaceae</taxon>
        <taxon>Sinorhizobium/Ensifer group</taxon>
        <taxon>Sinorhizobium</taxon>
    </lineage>
</organism>
<reference key="1">
    <citation type="journal article" date="2001" name="Proc. Natl. Acad. Sci. U.S.A.">
        <title>Analysis of the chromosome sequence of the legume symbiont Sinorhizobium meliloti strain 1021.</title>
        <authorList>
            <person name="Capela D."/>
            <person name="Barloy-Hubler F."/>
            <person name="Gouzy J."/>
            <person name="Bothe G."/>
            <person name="Ampe F."/>
            <person name="Batut J."/>
            <person name="Boistard P."/>
            <person name="Becker A."/>
            <person name="Boutry M."/>
            <person name="Cadieu E."/>
            <person name="Dreano S."/>
            <person name="Gloux S."/>
            <person name="Godrie T."/>
            <person name="Goffeau A."/>
            <person name="Kahn D."/>
            <person name="Kiss E."/>
            <person name="Lelaure V."/>
            <person name="Masuy D."/>
            <person name="Pohl T."/>
            <person name="Portetelle D."/>
            <person name="Puehler A."/>
            <person name="Purnelle B."/>
            <person name="Ramsperger U."/>
            <person name="Renard C."/>
            <person name="Thebault P."/>
            <person name="Vandenbol M."/>
            <person name="Weidner S."/>
            <person name="Galibert F."/>
        </authorList>
    </citation>
    <scope>NUCLEOTIDE SEQUENCE [LARGE SCALE GENOMIC DNA]</scope>
    <source>
        <strain>1021</strain>
    </source>
</reference>
<reference key="2">
    <citation type="journal article" date="2001" name="Science">
        <title>The composite genome of the legume symbiont Sinorhizobium meliloti.</title>
        <authorList>
            <person name="Galibert F."/>
            <person name="Finan T.M."/>
            <person name="Long S.R."/>
            <person name="Puehler A."/>
            <person name="Abola P."/>
            <person name="Ampe F."/>
            <person name="Barloy-Hubler F."/>
            <person name="Barnett M.J."/>
            <person name="Becker A."/>
            <person name="Boistard P."/>
            <person name="Bothe G."/>
            <person name="Boutry M."/>
            <person name="Bowser L."/>
            <person name="Buhrmester J."/>
            <person name="Cadieu E."/>
            <person name="Capela D."/>
            <person name="Chain P."/>
            <person name="Cowie A."/>
            <person name="Davis R.W."/>
            <person name="Dreano S."/>
            <person name="Federspiel N.A."/>
            <person name="Fisher R.F."/>
            <person name="Gloux S."/>
            <person name="Godrie T."/>
            <person name="Goffeau A."/>
            <person name="Golding B."/>
            <person name="Gouzy J."/>
            <person name="Gurjal M."/>
            <person name="Hernandez-Lucas I."/>
            <person name="Hong A."/>
            <person name="Huizar L."/>
            <person name="Hyman R.W."/>
            <person name="Jones T."/>
            <person name="Kahn D."/>
            <person name="Kahn M.L."/>
            <person name="Kalman S."/>
            <person name="Keating D.H."/>
            <person name="Kiss E."/>
            <person name="Komp C."/>
            <person name="Lelaure V."/>
            <person name="Masuy D."/>
            <person name="Palm C."/>
            <person name="Peck M.C."/>
            <person name="Pohl T.M."/>
            <person name="Portetelle D."/>
            <person name="Purnelle B."/>
            <person name="Ramsperger U."/>
            <person name="Surzycki R."/>
            <person name="Thebault P."/>
            <person name="Vandenbol M."/>
            <person name="Vorhoelter F.J."/>
            <person name="Weidner S."/>
            <person name="Wells D.H."/>
            <person name="Wong K."/>
            <person name="Yeh K.-C."/>
            <person name="Batut J."/>
        </authorList>
    </citation>
    <scope>NUCLEOTIDE SEQUENCE [LARGE SCALE GENOMIC DNA]</scope>
    <source>
        <strain>1021</strain>
    </source>
</reference>
<feature type="chain" id="PRO_0000195394" description="Ribonuclease H">
    <location>
        <begin position="1"/>
        <end position="153"/>
    </location>
</feature>
<feature type="domain" description="RNase H type-1" evidence="2">
    <location>
        <begin position="1"/>
        <end position="141"/>
    </location>
</feature>
<feature type="region of interest" description="Disordered" evidence="3">
    <location>
        <begin position="123"/>
        <end position="153"/>
    </location>
</feature>
<feature type="compositionally biased region" description="Basic and acidic residues" evidence="3">
    <location>
        <begin position="125"/>
        <end position="153"/>
    </location>
</feature>
<feature type="binding site" evidence="1">
    <location>
        <position position="9"/>
    </location>
    <ligand>
        <name>Mg(2+)</name>
        <dbReference type="ChEBI" id="CHEBI:18420"/>
        <label>1</label>
    </ligand>
</feature>
<feature type="binding site" evidence="1">
    <location>
        <position position="9"/>
    </location>
    <ligand>
        <name>Mg(2+)</name>
        <dbReference type="ChEBI" id="CHEBI:18420"/>
        <label>2</label>
    </ligand>
</feature>
<feature type="binding site" evidence="1">
    <location>
        <position position="47"/>
    </location>
    <ligand>
        <name>Mg(2+)</name>
        <dbReference type="ChEBI" id="CHEBI:18420"/>
        <label>1</label>
    </ligand>
</feature>
<feature type="binding site" evidence="1">
    <location>
        <position position="69"/>
    </location>
    <ligand>
        <name>Mg(2+)</name>
        <dbReference type="ChEBI" id="CHEBI:18420"/>
        <label>1</label>
    </ligand>
</feature>
<feature type="binding site" evidence="1">
    <location>
        <position position="133"/>
    </location>
    <ligand>
        <name>Mg(2+)</name>
        <dbReference type="ChEBI" id="CHEBI:18420"/>
        <label>2</label>
    </ligand>
</feature>
<evidence type="ECO:0000255" key="1">
    <source>
        <dbReference type="HAMAP-Rule" id="MF_00042"/>
    </source>
</evidence>
<evidence type="ECO:0000255" key="2">
    <source>
        <dbReference type="PROSITE-ProRule" id="PRU00408"/>
    </source>
</evidence>
<evidence type="ECO:0000256" key="3">
    <source>
        <dbReference type="SAM" id="MobiDB-lite"/>
    </source>
</evidence>
<sequence>MKHVHIFTDGACSGNPGPGGWGAVLRYGDVEKEMSGGEAETTNNRMELLAAISALNALRQPCEVDLHTDSKYVMDGISKWIHGWKRNGWKTGDRKPVKNGELWQALDEARNRHNVTWHWVKGHAGHPENERADELARKGMEPFKKARRADAVK</sequence>
<comment type="function">
    <text evidence="1">Endonuclease that specifically degrades the RNA of RNA-DNA hybrids.</text>
</comment>
<comment type="catalytic activity">
    <reaction evidence="1">
        <text>Endonucleolytic cleavage to 5'-phosphomonoester.</text>
        <dbReference type="EC" id="3.1.26.4"/>
    </reaction>
</comment>
<comment type="cofactor">
    <cofactor evidence="1">
        <name>Mg(2+)</name>
        <dbReference type="ChEBI" id="CHEBI:18420"/>
    </cofactor>
    <text evidence="1">Binds 1 Mg(2+) ion per subunit. May bind a second metal ion at a regulatory site, or after substrate binding.</text>
</comment>
<comment type="subunit">
    <text evidence="1">Monomer.</text>
</comment>
<comment type="subcellular location">
    <subcellularLocation>
        <location evidence="1">Cytoplasm</location>
    </subcellularLocation>
</comment>
<comment type="similarity">
    <text evidence="1">Belongs to the RNase H family.</text>
</comment>
<dbReference type="EC" id="3.1.26.4" evidence="1"/>
<dbReference type="EMBL" id="AL591688">
    <property type="protein sequence ID" value="CAC45486.1"/>
    <property type="molecule type" value="Genomic_DNA"/>
</dbReference>
<dbReference type="RefSeq" id="NP_385020.1">
    <property type="nucleotide sequence ID" value="NC_003047.1"/>
</dbReference>
<dbReference type="RefSeq" id="WP_010968914.1">
    <property type="nucleotide sequence ID" value="NC_003047.1"/>
</dbReference>
<dbReference type="SMR" id="Q92RG0"/>
<dbReference type="EnsemblBacteria" id="CAC45486">
    <property type="protein sequence ID" value="CAC45486"/>
    <property type="gene ID" value="SMc00018"/>
</dbReference>
<dbReference type="KEGG" id="sme:SMc00018"/>
<dbReference type="PATRIC" id="fig|266834.11.peg.2312"/>
<dbReference type="eggNOG" id="COG0328">
    <property type="taxonomic scope" value="Bacteria"/>
</dbReference>
<dbReference type="HOGENOM" id="CLU_030894_6_0_5"/>
<dbReference type="OrthoDB" id="7845843at2"/>
<dbReference type="Proteomes" id="UP000001976">
    <property type="component" value="Chromosome"/>
</dbReference>
<dbReference type="GO" id="GO:0005737">
    <property type="term" value="C:cytoplasm"/>
    <property type="evidence" value="ECO:0007669"/>
    <property type="project" value="UniProtKB-SubCell"/>
</dbReference>
<dbReference type="GO" id="GO:0000287">
    <property type="term" value="F:magnesium ion binding"/>
    <property type="evidence" value="ECO:0007669"/>
    <property type="project" value="UniProtKB-UniRule"/>
</dbReference>
<dbReference type="GO" id="GO:0003676">
    <property type="term" value="F:nucleic acid binding"/>
    <property type="evidence" value="ECO:0007669"/>
    <property type="project" value="InterPro"/>
</dbReference>
<dbReference type="GO" id="GO:0004523">
    <property type="term" value="F:RNA-DNA hybrid ribonuclease activity"/>
    <property type="evidence" value="ECO:0007669"/>
    <property type="project" value="UniProtKB-UniRule"/>
</dbReference>
<dbReference type="GO" id="GO:0043137">
    <property type="term" value="P:DNA replication, removal of RNA primer"/>
    <property type="evidence" value="ECO:0007669"/>
    <property type="project" value="TreeGrafter"/>
</dbReference>
<dbReference type="CDD" id="cd09278">
    <property type="entry name" value="RNase_HI_prokaryote_like"/>
    <property type="match status" value="1"/>
</dbReference>
<dbReference type="FunFam" id="3.30.420.10:FF:000089">
    <property type="entry name" value="Ribonuclease H"/>
    <property type="match status" value="1"/>
</dbReference>
<dbReference type="Gene3D" id="3.30.420.10">
    <property type="entry name" value="Ribonuclease H-like superfamily/Ribonuclease H"/>
    <property type="match status" value="1"/>
</dbReference>
<dbReference type="HAMAP" id="MF_00042">
    <property type="entry name" value="RNase_H"/>
    <property type="match status" value="1"/>
</dbReference>
<dbReference type="InterPro" id="IPR050092">
    <property type="entry name" value="RNase_H"/>
</dbReference>
<dbReference type="InterPro" id="IPR012337">
    <property type="entry name" value="RNaseH-like_sf"/>
</dbReference>
<dbReference type="InterPro" id="IPR002156">
    <property type="entry name" value="RNaseH_domain"/>
</dbReference>
<dbReference type="InterPro" id="IPR036397">
    <property type="entry name" value="RNaseH_sf"/>
</dbReference>
<dbReference type="InterPro" id="IPR022892">
    <property type="entry name" value="RNaseHI"/>
</dbReference>
<dbReference type="NCBIfam" id="NF001236">
    <property type="entry name" value="PRK00203.1"/>
    <property type="match status" value="1"/>
</dbReference>
<dbReference type="PANTHER" id="PTHR10642">
    <property type="entry name" value="RIBONUCLEASE H1"/>
    <property type="match status" value="1"/>
</dbReference>
<dbReference type="PANTHER" id="PTHR10642:SF26">
    <property type="entry name" value="RIBONUCLEASE H1"/>
    <property type="match status" value="1"/>
</dbReference>
<dbReference type="Pfam" id="PF00075">
    <property type="entry name" value="RNase_H"/>
    <property type="match status" value="1"/>
</dbReference>
<dbReference type="SUPFAM" id="SSF53098">
    <property type="entry name" value="Ribonuclease H-like"/>
    <property type="match status" value="1"/>
</dbReference>
<dbReference type="PROSITE" id="PS50879">
    <property type="entry name" value="RNASE_H_1"/>
    <property type="match status" value="1"/>
</dbReference>
<accession>Q92RG0</accession>
<protein>
    <recommendedName>
        <fullName evidence="1">Ribonuclease H</fullName>
        <shortName evidence="1">RNase H</shortName>
        <ecNumber evidence="1">3.1.26.4</ecNumber>
    </recommendedName>
</protein>
<gene>
    <name evidence="1" type="primary">rnhA</name>
    <name type="synonym">rnhA1</name>
    <name type="ordered locus">R00914</name>
    <name type="ORF">SMc00018</name>
</gene>
<keyword id="KW-0963">Cytoplasm</keyword>
<keyword id="KW-0255">Endonuclease</keyword>
<keyword id="KW-0378">Hydrolase</keyword>
<keyword id="KW-0460">Magnesium</keyword>
<keyword id="KW-0479">Metal-binding</keyword>
<keyword id="KW-0540">Nuclease</keyword>
<keyword id="KW-1185">Reference proteome</keyword>
<proteinExistence type="inferred from homology"/>
<name>RNH_RHIME</name>